<evidence type="ECO:0000250" key="1"/>
<evidence type="ECO:0000250" key="2">
    <source>
        <dbReference type="UniProtKB" id="P00157"/>
    </source>
</evidence>
<evidence type="ECO:0000255" key="3">
    <source>
        <dbReference type="PROSITE-ProRule" id="PRU00967"/>
    </source>
</evidence>
<evidence type="ECO:0000255" key="4">
    <source>
        <dbReference type="PROSITE-ProRule" id="PRU00968"/>
    </source>
</evidence>
<name>CYB_CEPGR</name>
<feature type="chain" id="PRO_0000060747" description="Cytochrome b">
    <location>
        <begin position="1"/>
        <end position="380"/>
    </location>
</feature>
<feature type="transmembrane region" description="Helical" evidence="2">
    <location>
        <begin position="34"/>
        <end position="54"/>
    </location>
</feature>
<feature type="transmembrane region" description="Helical" evidence="2">
    <location>
        <begin position="78"/>
        <end position="99"/>
    </location>
</feature>
<feature type="transmembrane region" description="Helical" evidence="2">
    <location>
        <begin position="114"/>
        <end position="134"/>
    </location>
</feature>
<feature type="transmembrane region" description="Helical" evidence="2">
    <location>
        <begin position="179"/>
        <end position="199"/>
    </location>
</feature>
<feature type="transmembrane region" description="Helical" evidence="2">
    <location>
        <begin position="227"/>
        <end position="247"/>
    </location>
</feature>
<feature type="transmembrane region" description="Helical" evidence="2">
    <location>
        <begin position="289"/>
        <end position="309"/>
    </location>
</feature>
<feature type="transmembrane region" description="Helical" evidence="2">
    <location>
        <begin position="321"/>
        <end position="341"/>
    </location>
</feature>
<feature type="transmembrane region" description="Helical" evidence="2">
    <location>
        <begin position="348"/>
        <end position="368"/>
    </location>
</feature>
<feature type="binding site" description="axial binding residue" evidence="2">
    <location>
        <position position="84"/>
    </location>
    <ligand>
        <name>heme b</name>
        <dbReference type="ChEBI" id="CHEBI:60344"/>
        <label>b562</label>
    </ligand>
    <ligandPart>
        <name>Fe</name>
        <dbReference type="ChEBI" id="CHEBI:18248"/>
    </ligandPart>
</feature>
<feature type="binding site" description="axial binding residue" evidence="2">
    <location>
        <position position="98"/>
    </location>
    <ligand>
        <name>heme b</name>
        <dbReference type="ChEBI" id="CHEBI:60344"/>
        <label>b566</label>
    </ligand>
    <ligandPart>
        <name>Fe</name>
        <dbReference type="ChEBI" id="CHEBI:18248"/>
    </ligandPart>
</feature>
<feature type="binding site" description="axial binding residue" evidence="2">
    <location>
        <position position="183"/>
    </location>
    <ligand>
        <name>heme b</name>
        <dbReference type="ChEBI" id="CHEBI:60344"/>
        <label>b562</label>
    </ligand>
    <ligandPart>
        <name>Fe</name>
        <dbReference type="ChEBI" id="CHEBI:18248"/>
    </ligandPart>
</feature>
<feature type="binding site" description="axial binding residue" evidence="2">
    <location>
        <position position="197"/>
    </location>
    <ligand>
        <name>heme b</name>
        <dbReference type="ChEBI" id="CHEBI:60344"/>
        <label>b566</label>
    </ligand>
    <ligandPart>
        <name>Fe</name>
        <dbReference type="ChEBI" id="CHEBI:18248"/>
    </ligandPart>
</feature>
<feature type="binding site" evidence="2">
    <location>
        <position position="202"/>
    </location>
    <ligand>
        <name>a ubiquinone</name>
        <dbReference type="ChEBI" id="CHEBI:16389"/>
    </ligand>
</feature>
<comment type="function">
    <text evidence="2">Component of the ubiquinol-cytochrome c reductase complex (complex III or cytochrome b-c1 complex) that is part of the mitochondrial respiratory chain. The b-c1 complex mediates electron transfer from ubiquinol to cytochrome c. Contributes to the generation of a proton gradient across the mitochondrial membrane that is then used for ATP synthesis.</text>
</comment>
<comment type="cofactor">
    <cofactor evidence="2">
        <name>heme b</name>
        <dbReference type="ChEBI" id="CHEBI:60344"/>
    </cofactor>
    <text evidence="2">Binds 2 heme b groups non-covalently.</text>
</comment>
<comment type="subunit">
    <text evidence="2">The cytochrome bc1 complex contains 11 subunits: 3 respiratory subunits (MT-CYB, CYC1 and UQCRFS1), 2 core proteins (UQCRC1 and UQCRC2) and 6 low-molecular weight proteins (UQCRH/QCR6, UQCRB/QCR7, UQCRQ/QCR8, UQCR10/QCR9, UQCR11/QCR10 and a cleavage product of UQCRFS1). This cytochrome bc1 complex then forms a dimer.</text>
</comment>
<comment type="subcellular location">
    <subcellularLocation>
        <location evidence="2">Mitochondrion inner membrane</location>
        <topology evidence="2">Multi-pass membrane protein</topology>
    </subcellularLocation>
</comment>
<comment type="miscellaneous">
    <text evidence="1">Heme 1 (or BL or b562) is low-potential and absorbs at about 562 nm, and heme 2 (or BH or b566) is high-potential and absorbs at about 566 nm.</text>
</comment>
<comment type="similarity">
    <text evidence="3 4">Belongs to the cytochrome b family.</text>
</comment>
<comment type="caution">
    <text evidence="2">The full-length protein contains only eight transmembrane helices, not nine as predicted by bioinformatics tools.</text>
</comment>
<sequence>MAPNLRKSHPLLKIINNSLIDLPTPSNISAWWNFGSLLGICLLTQILTGLLLATHYTADTTLAFSSVAHTCRNVQYGWLIRNLHANGASFFFICIYLHIGRGFYYGSYLNKETWNTGVILLLTLMATAFVGYVLPWGQMSFWGATVITNLFSAIPYIGQTLVEWAWGGFSVDNPTLTRFFALHFLLPFMIAGLALIHLTFLHESGSNNPLGILSNCDKIPFHPYFSLKDILGFIIMFLPLTTLALFSPNLLGDPENFTPANPLITPPHIKPEWYFLFAYAILRSIPNKLGGVLALAASVLVLFLTPLLHKSKQRAMTFRPLSQLLFWTLVTNLCILTWVGSQPVEHPFIIIGQLASLTYFTILLLLFPIIGALENKMLNY</sequence>
<geneLocation type="mitochondrion"/>
<keyword id="KW-0249">Electron transport</keyword>
<keyword id="KW-0349">Heme</keyword>
<keyword id="KW-0408">Iron</keyword>
<keyword id="KW-0472">Membrane</keyword>
<keyword id="KW-0479">Metal-binding</keyword>
<keyword id="KW-0496">Mitochondrion</keyword>
<keyword id="KW-0999">Mitochondrion inner membrane</keyword>
<keyword id="KW-0679">Respiratory chain</keyword>
<keyword id="KW-0812">Transmembrane</keyword>
<keyword id="KW-1133">Transmembrane helix</keyword>
<keyword id="KW-0813">Transport</keyword>
<keyword id="KW-0830">Ubiquinone</keyword>
<organism>
    <name type="scientific">Cepphus grylle</name>
    <name type="common">Black guillemot</name>
    <name type="synonym">Alca grylle</name>
    <dbReference type="NCBI Taxonomy" id="28697"/>
    <lineage>
        <taxon>Eukaryota</taxon>
        <taxon>Metazoa</taxon>
        <taxon>Chordata</taxon>
        <taxon>Craniata</taxon>
        <taxon>Vertebrata</taxon>
        <taxon>Euteleostomi</taxon>
        <taxon>Archelosauria</taxon>
        <taxon>Archosauria</taxon>
        <taxon>Dinosauria</taxon>
        <taxon>Saurischia</taxon>
        <taxon>Theropoda</taxon>
        <taxon>Coelurosauria</taxon>
        <taxon>Aves</taxon>
        <taxon>Neognathae</taxon>
        <taxon>Neoaves</taxon>
        <taxon>Charadriiformes</taxon>
        <taxon>Alcidae</taxon>
        <taxon>Cepphus</taxon>
    </lineage>
</organism>
<proteinExistence type="inferred from homology"/>
<reference key="1">
    <citation type="journal article" date="2002" name="Mol. Biol. Evol.">
        <title>Mitochondrial DNA sequence evolution and phylogeny of the Atlantic Alcidae, including the extinct great auk (Pinguinus impennis).</title>
        <authorList>
            <person name="Moum T."/>
            <person name="Arnason U."/>
            <person name="Arnason E."/>
        </authorList>
    </citation>
    <scope>NUCLEOTIDE SEQUENCE [GENOMIC DNA]</scope>
    <source>
        <tissue>Heart</tissue>
    </source>
</reference>
<dbReference type="EMBL" id="AJ242688">
    <property type="protein sequence ID" value="CAC80340.1"/>
    <property type="molecule type" value="Genomic_DNA"/>
</dbReference>
<dbReference type="SMR" id="Q8LX87"/>
<dbReference type="GO" id="GO:0005743">
    <property type="term" value="C:mitochondrial inner membrane"/>
    <property type="evidence" value="ECO:0007669"/>
    <property type="project" value="UniProtKB-SubCell"/>
</dbReference>
<dbReference type="GO" id="GO:0045275">
    <property type="term" value="C:respiratory chain complex III"/>
    <property type="evidence" value="ECO:0007669"/>
    <property type="project" value="InterPro"/>
</dbReference>
<dbReference type="GO" id="GO:0046872">
    <property type="term" value="F:metal ion binding"/>
    <property type="evidence" value="ECO:0007669"/>
    <property type="project" value="UniProtKB-KW"/>
</dbReference>
<dbReference type="GO" id="GO:0008121">
    <property type="term" value="F:ubiquinol-cytochrome-c reductase activity"/>
    <property type="evidence" value="ECO:0007669"/>
    <property type="project" value="InterPro"/>
</dbReference>
<dbReference type="GO" id="GO:0006122">
    <property type="term" value="P:mitochondrial electron transport, ubiquinol to cytochrome c"/>
    <property type="evidence" value="ECO:0007669"/>
    <property type="project" value="TreeGrafter"/>
</dbReference>
<dbReference type="CDD" id="cd00290">
    <property type="entry name" value="cytochrome_b_C"/>
    <property type="match status" value="1"/>
</dbReference>
<dbReference type="CDD" id="cd00284">
    <property type="entry name" value="Cytochrome_b_N"/>
    <property type="match status" value="1"/>
</dbReference>
<dbReference type="FunFam" id="1.20.810.10:FF:000002">
    <property type="entry name" value="Cytochrome b"/>
    <property type="match status" value="1"/>
</dbReference>
<dbReference type="Gene3D" id="1.20.810.10">
    <property type="entry name" value="Cytochrome Bc1 Complex, Chain C"/>
    <property type="match status" value="1"/>
</dbReference>
<dbReference type="InterPro" id="IPR005798">
    <property type="entry name" value="Cyt_b/b6_C"/>
</dbReference>
<dbReference type="InterPro" id="IPR036150">
    <property type="entry name" value="Cyt_b/b6_C_sf"/>
</dbReference>
<dbReference type="InterPro" id="IPR005797">
    <property type="entry name" value="Cyt_b/b6_N"/>
</dbReference>
<dbReference type="InterPro" id="IPR027387">
    <property type="entry name" value="Cytb/b6-like_sf"/>
</dbReference>
<dbReference type="InterPro" id="IPR030689">
    <property type="entry name" value="Cytochrome_b"/>
</dbReference>
<dbReference type="InterPro" id="IPR048260">
    <property type="entry name" value="Cytochrome_b_C_euk/bac"/>
</dbReference>
<dbReference type="InterPro" id="IPR048259">
    <property type="entry name" value="Cytochrome_b_N_euk/bac"/>
</dbReference>
<dbReference type="InterPro" id="IPR016174">
    <property type="entry name" value="Di-haem_cyt_TM"/>
</dbReference>
<dbReference type="PANTHER" id="PTHR19271">
    <property type="entry name" value="CYTOCHROME B"/>
    <property type="match status" value="1"/>
</dbReference>
<dbReference type="PANTHER" id="PTHR19271:SF16">
    <property type="entry name" value="CYTOCHROME B"/>
    <property type="match status" value="1"/>
</dbReference>
<dbReference type="Pfam" id="PF00032">
    <property type="entry name" value="Cytochrom_B_C"/>
    <property type="match status" value="1"/>
</dbReference>
<dbReference type="Pfam" id="PF00033">
    <property type="entry name" value="Cytochrome_B"/>
    <property type="match status" value="1"/>
</dbReference>
<dbReference type="PIRSF" id="PIRSF038885">
    <property type="entry name" value="COB"/>
    <property type="match status" value="1"/>
</dbReference>
<dbReference type="SUPFAM" id="SSF81648">
    <property type="entry name" value="a domain/subunit of cytochrome bc1 complex (Ubiquinol-cytochrome c reductase)"/>
    <property type="match status" value="1"/>
</dbReference>
<dbReference type="SUPFAM" id="SSF81342">
    <property type="entry name" value="Transmembrane di-heme cytochromes"/>
    <property type="match status" value="1"/>
</dbReference>
<dbReference type="PROSITE" id="PS51003">
    <property type="entry name" value="CYTB_CTER"/>
    <property type="match status" value="1"/>
</dbReference>
<dbReference type="PROSITE" id="PS51002">
    <property type="entry name" value="CYTB_NTER"/>
    <property type="match status" value="1"/>
</dbReference>
<gene>
    <name type="primary">MT-CYB</name>
    <name type="synonym">COB</name>
    <name type="synonym">CYTB</name>
    <name type="synonym">MTCYB</name>
</gene>
<accession>Q8LX87</accession>
<protein>
    <recommendedName>
        <fullName>Cytochrome b</fullName>
    </recommendedName>
    <alternativeName>
        <fullName>Complex III subunit 3</fullName>
    </alternativeName>
    <alternativeName>
        <fullName>Complex III subunit III</fullName>
    </alternativeName>
    <alternativeName>
        <fullName>Cytochrome b-c1 complex subunit 3</fullName>
    </alternativeName>
    <alternativeName>
        <fullName>Ubiquinol-cytochrome-c reductase complex cytochrome b subunit</fullName>
    </alternativeName>
</protein>